<comment type="function">
    <text evidence="1">Nucleolar protein that is involved in ribosomal RNA (rRNA) processing. Also plays a role in primary cilia resorption, and cell cycle progression in neurogenesis and neocortex development. Part of the small subunit (SSU) processome, first precursor of the small eukaryotic ribosomal subunit. During the assembly of the SSU processome in the nucleolus, many ribosome biogenesis factors, an RNA chaperone and ribosomal proteins associate with the nascent pre-rRNA and work in concert to generate RNA folding, modifications, rearrangements and cleavage as well as targeted degradation of pre-ribosomal RNA by the RNA exosome.</text>
</comment>
<comment type="subunit">
    <text evidence="1">Part of the small subunit (SSU) processome, composed of more than 70 proteins and the RNA chaperone small nucleolar RNA (snoRNA) U3. Interacts with NOL6; required for NOL6 localization to nucleolus.</text>
</comment>
<comment type="subcellular location">
    <subcellularLocation>
        <location evidence="1">Nucleus</location>
        <location evidence="1">Nucleolus</location>
    </subcellularLocation>
    <subcellularLocation>
        <location evidence="1">Cell projection</location>
        <location evidence="1">Cilium</location>
    </subcellularLocation>
    <subcellularLocation>
        <location evidence="1">Cytoplasm</location>
        <location evidence="1">Cytoskeleton</location>
        <location evidence="1">Microtubule organizing center</location>
        <location evidence="1">Centrosome</location>
    </subcellularLocation>
</comment>
<comment type="similarity">
    <text evidence="4">Belongs to the RRP7 family.</text>
</comment>
<protein>
    <recommendedName>
        <fullName>Ribosomal RNA-processing protein 7 homolog A</fullName>
    </recommendedName>
    <alternativeName>
        <fullName>Gastric cancer antigen Zg14 homolog</fullName>
    </alternativeName>
</protein>
<dbReference type="EMBL" id="AK003698">
    <property type="protein sequence ID" value="BAB22944.1"/>
    <property type="molecule type" value="mRNA"/>
</dbReference>
<dbReference type="EMBL" id="AK032596">
    <property type="protein sequence ID" value="BAC27942.1"/>
    <property type="molecule type" value="mRNA"/>
</dbReference>
<dbReference type="EMBL" id="AK036247">
    <property type="protein sequence ID" value="BAC29360.1"/>
    <property type="molecule type" value="mRNA"/>
</dbReference>
<dbReference type="EMBL" id="AK088456">
    <property type="protein sequence ID" value="BAC40363.1"/>
    <property type="molecule type" value="mRNA"/>
</dbReference>
<dbReference type="EMBL" id="AK146821">
    <property type="protein sequence ID" value="BAE27459.1"/>
    <property type="molecule type" value="mRNA"/>
</dbReference>
<dbReference type="EMBL" id="AK159553">
    <property type="protein sequence ID" value="BAE35178.1"/>
    <property type="molecule type" value="mRNA"/>
</dbReference>
<dbReference type="EMBL" id="AK168189">
    <property type="protein sequence ID" value="BAE40149.1"/>
    <property type="molecule type" value="mRNA"/>
</dbReference>
<dbReference type="EMBL" id="AK168850">
    <property type="protein sequence ID" value="BAE40672.1"/>
    <property type="molecule type" value="mRNA"/>
</dbReference>
<dbReference type="EMBL" id="BC012523">
    <property type="protein sequence ID" value="AAH12523.1"/>
    <property type="molecule type" value="mRNA"/>
</dbReference>
<dbReference type="CCDS" id="CCDS27696.1"/>
<dbReference type="RefSeq" id="NP_083377.3">
    <property type="nucleotide sequence ID" value="NM_029101.4"/>
</dbReference>
<dbReference type="SMR" id="Q9D1C9"/>
<dbReference type="BioGRID" id="217014">
    <property type="interactions" value="4"/>
</dbReference>
<dbReference type="FunCoup" id="Q9D1C9">
    <property type="interactions" value="2434"/>
</dbReference>
<dbReference type="STRING" id="10090.ENSMUSP00000018184"/>
<dbReference type="iPTMnet" id="Q9D1C9"/>
<dbReference type="PhosphoSitePlus" id="Q9D1C9"/>
<dbReference type="PaxDb" id="10090-ENSMUSP00000018184"/>
<dbReference type="ProteomicsDB" id="299899"/>
<dbReference type="Pumba" id="Q9D1C9"/>
<dbReference type="Antibodypedia" id="277">
    <property type="antibodies" value="124 antibodies from 27 providers"/>
</dbReference>
<dbReference type="Ensembl" id="ENSMUST00000018184.10">
    <property type="protein sequence ID" value="ENSMUSP00000018184.4"/>
    <property type="gene ID" value="ENSMUSG00000018040.10"/>
</dbReference>
<dbReference type="GeneID" id="74778"/>
<dbReference type="KEGG" id="mmu:74778"/>
<dbReference type="UCSC" id="uc007wzy.3">
    <property type="organism name" value="mouse"/>
</dbReference>
<dbReference type="AGR" id="MGI:1922028"/>
<dbReference type="CTD" id="27341"/>
<dbReference type="MGI" id="MGI:1922028">
    <property type="gene designation" value="Rrp7a"/>
</dbReference>
<dbReference type="VEuPathDB" id="HostDB:ENSMUSG00000018040"/>
<dbReference type="eggNOG" id="KOG4008">
    <property type="taxonomic scope" value="Eukaryota"/>
</dbReference>
<dbReference type="GeneTree" id="ENSGT00390000018482"/>
<dbReference type="HOGENOM" id="CLU_036234_2_1_1"/>
<dbReference type="InParanoid" id="Q9D1C9"/>
<dbReference type="OMA" id="GIHKWIA"/>
<dbReference type="OrthoDB" id="5390at2759"/>
<dbReference type="PhylomeDB" id="Q9D1C9"/>
<dbReference type="TreeFam" id="TF313949"/>
<dbReference type="Reactome" id="R-MMU-6791226">
    <property type="pathway name" value="Major pathway of rRNA processing in the nucleolus and cytosol"/>
</dbReference>
<dbReference type="BioGRID-ORCS" id="74778">
    <property type="hits" value="27 hits in 78 CRISPR screens"/>
</dbReference>
<dbReference type="ChiTaRS" id="Rrp7a">
    <property type="organism name" value="mouse"/>
</dbReference>
<dbReference type="PRO" id="PR:Q9D1C9"/>
<dbReference type="Proteomes" id="UP000000589">
    <property type="component" value="Chromosome 15"/>
</dbReference>
<dbReference type="RNAct" id="Q9D1C9">
    <property type="molecule type" value="protein"/>
</dbReference>
<dbReference type="Bgee" id="ENSMUSG00000018040">
    <property type="expression patterns" value="Expressed in dentate gyrus of hippocampal formation granule cell and 75 other cell types or tissues"/>
</dbReference>
<dbReference type="ExpressionAtlas" id="Q9D1C9">
    <property type="expression patterns" value="baseline and differential"/>
</dbReference>
<dbReference type="GO" id="GO:0030054">
    <property type="term" value="C:cell junction"/>
    <property type="evidence" value="ECO:0007669"/>
    <property type="project" value="Ensembl"/>
</dbReference>
<dbReference type="GO" id="GO:0005813">
    <property type="term" value="C:centrosome"/>
    <property type="evidence" value="ECO:0000250"/>
    <property type="project" value="UniProtKB"/>
</dbReference>
<dbReference type="GO" id="GO:0005929">
    <property type="term" value="C:cilium"/>
    <property type="evidence" value="ECO:0000250"/>
    <property type="project" value="UniProtKB"/>
</dbReference>
<dbReference type="GO" id="GO:0005737">
    <property type="term" value="C:cytoplasm"/>
    <property type="evidence" value="ECO:0000314"/>
    <property type="project" value="MGI"/>
</dbReference>
<dbReference type="GO" id="GO:0005730">
    <property type="term" value="C:nucleolus"/>
    <property type="evidence" value="ECO:0000250"/>
    <property type="project" value="UniProtKB"/>
</dbReference>
<dbReference type="GO" id="GO:0005654">
    <property type="term" value="C:nucleoplasm"/>
    <property type="evidence" value="ECO:0007669"/>
    <property type="project" value="Ensembl"/>
</dbReference>
<dbReference type="GO" id="GO:0032040">
    <property type="term" value="C:small-subunit processome"/>
    <property type="evidence" value="ECO:0000250"/>
    <property type="project" value="UniProtKB"/>
</dbReference>
<dbReference type="GO" id="GO:0003723">
    <property type="term" value="F:RNA binding"/>
    <property type="evidence" value="ECO:0007669"/>
    <property type="project" value="UniProtKB-KW"/>
</dbReference>
<dbReference type="GO" id="GO:0001825">
    <property type="term" value="P:blastocyst formation"/>
    <property type="evidence" value="ECO:0000315"/>
    <property type="project" value="MGI"/>
</dbReference>
<dbReference type="GO" id="GO:0061523">
    <property type="term" value="P:cilium disassembly"/>
    <property type="evidence" value="ECO:0000250"/>
    <property type="project" value="UniProtKB"/>
</dbReference>
<dbReference type="GO" id="GO:1902570">
    <property type="term" value="P:protein localization to nucleolus"/>
    <property type="evidence" value="ECO:0007669"/>
    <property type="project" value="Ensembl"/>
</dbReference>
<dbReference type="GO" id="GO:0042274">
    <property type="term" value="P:ribosomal small subunit biogenesis"/>
    <property type="evidence" value="ECO:0000250"/>
    <property type="project" value="UniProtKB"/>
</dbReference>
<dbReference type="GO" id="GO:0042254">
    <property type="term" value="P:ribosome biogenesis"/>
    <property type="evidence" value="ECO:0000250"/>
    <property type="project" value="UniProtKB"/>
</dbReference>
<dbReference type="GO" id="GO:0006364">
    <property type="term" value="P:rRNA processing"/>
    <property type="evidence" value="ECO:0000250"/>
    <property type="project" value="UniProtKB"/>
</dbReference>
<dbReference type="CDD" id="cd12294">
    <property type="entry name" value="RRM_Rrp7A"/>
    <property type="match status" value="1"/>
</dbReference>
<dbReference type="CDD" id="cd12951">
    <property type="entry name" value="RRP7_Rrp7A"/>
    <property type="match status" value="1"/>
</dbReference>
<dbReference type="FunFam" id="3.30.70.330:FF:000512">
    <property type="entry name" value="Ribosomal RNA-processing 7 homolog A"/>
    <property type="match status" value="1"/>
</dbReference>
<dbReference type="Gene3D" id="3.30.70.330">
    <property type="match status" value="1"/>
</dbReference>
<dbReference type="Gene3D" id="6.10.250.1770">
    <property type="match status" value="1"/>
</dbReference>
<dbReference type="InterPro" id="IPR012677">
    <property type="entry name" value="Nucleotide-bd_a/b_plait_sf"/>
</dbReference>
<dbReference type="InterPro" id="IPR035979">
    <property type="entry name" value="RBD_domain_sf"/>
</dbReference>
<dbReference type="InterPro" id="IPR040447">
    <property type="entry name" value="RRM_Rrp7"/>
</dbReference>
<dbReference type="InterPro" id="IPR040446">
    <property type="entry name" value="RRP7"/>
</dbReference>
<dbReference type="InterPro" id="IPR024326">
    <property type="entry name" value="RRP7_C"/>
</dbReference>
<dbReference type="InterPro" id="IPR034890">
    <property type="entry name" value="Rrp7A_RRM"/>
</dbReference>
<dbReference type="PANTHER" id="PTHR13191">
    <property type="entry name" value="RIBOSOMAL RNA PROCESSING PROTEIN 7-RELATED"/>
    <property type="match status" value="1"/>
</dbReference>
<dbReference type="PANTHER" id="PTHR13191:SF0">
    <property type="entry name" value="RIBOSOMAL RNA-PROCESSING PROTEIN 7 HOMOLOG A-RELATED"/>
    <property type="match status" value="1"/>
</dbReference>
<dbReference type="Pfam" id="PF17799">
    <property type="entry name" value="RRM_Rrp7"/>
    <property type="match status" value="1"/>
</dbReference>
<dbReference type="Pfam" id="PF12923">
    <property type="entry name" value="RRP7"/>
    <property type="match status" value="1"/>
</dbReference>
<dbReference type="SUPFAM" id="SSF54928">
    <property type="entry name" value="RNA-binding domain, RBD"/>
    <property type="match status" value="1"/>
</dbReference>
<reference key="1">
    <citation type="journal article" date="2005" name="Science">
        <title>The transcriptional landscape of the mammalian genome.</title>
        <authorList>
            <person name="Carninci P."/>
            <person name="Kasukawa T."/>
            <person name="Katayama S."/>
            <person name="Gough J."/>
            <person name="Frith M.C."/>
            <person name="Maeda N."/>
            <person name="Oyama R."/>
            <person name="Ravasi T."/>
            <person name="Lenhard B."/>
            <person name="Wells C."/>
            <person name="Kodzius R."/>
            <person name="Shimokawa K."/>
            <person name="Bajic V.B."/>
            <person name="Brenner S.E."/>
            <person name="Batalov S."/>
            <person name="Forrest A.R."/>
            <person name="Zavolan M."/>
            <person name="Davis M.J."/>
            <person name="Wilming L.G."/>
            <person name="Aidinis V."/>
            <person name="Allen J.E."/>
            <person name="Ambesi-Impiombato A."/>
            <person name="Apweiler R."/>
            <person name="Aturaliya R.N."/>
            <person name="Bailey T.L."/>
            <person name="Bansal M."/>
            <person name="Baxter L."/>
            <person name="Beisel K.W."/>
            <person name="Bersano T."/>
            <person name="Bono H."/>
            <person name="Chalk A.M."/>
            <person name="Chiu K.P."/>
            <person name="Choudhary V."/>
            <person name="Christoffels A."/>
            <person name="Clutterbuck D.R."/>
            <person name="Crowe M.L."/>
            <person name="Dalla E."/>
            <person name="Dalrymple B.P."/>
            <person name="de Bono B."/>
            <person name="Della Gatta G."/>
            <person name="di Bernardo D."/>
            <person name="Down T."/>
            <person name="Engstrom P."/>
            <person name="Fagiolini M."/>
            <person name="Faulkner G."/>
            <person name="Fletcher C.F."/>
            <person name="Fukushima T."/>
            <person name="Furuno M."/>
            <person name="Futaki S."/>
            <person name="Gariboldi M."/>
            <person name="Georgii-Hemming P."/>
            <person name="Gingeras T.R."/>
            <person name="Gojobori T."/>
            <person name="Green R.E."/>
            <person name="Gustincich S."/>
            <person name="Harbers M."/>
            <person name="Hayashi Y."/>
            <person name="Hensch T.K."/>
            <person name="Hirokawa N."/>
            <person name="Hill D."/>
            <person name="Huminiecki L."/>
            <person name="Iacono M."/>
            <person name="Ikeo K."/>
            <person name="Iwama A."/>
            <person name="Ishikawa T."/>
            <person name="Jakt M."/>
            <person name="Kanapin A."/>
            <person name="Katoh M."/>
            <person name="Kawasawa Y."/>
            <person name="Kelso J."/>
            <person name="Kitamura H."/>
            <person name="Kitano H."/>
            <person name="Kollias G."/>
            <person name="Krishnan S.P."/>
            <person name="Kruger A."/>
            <person name="Kummerfeld S.K."/>
            <person name="Kurochkin I.V."/>
            <person name="Lareau L.F."/>
            <person name="Lazarevic D."/>
            <person name="Lipovich L."/>
            <person name="Liu J."/>
            <person name="Liuni S."/>
            <person name="McWilliam S."/>
            <person name="Madan Babu M."/>
            <person name="Madera M."/>
            <person name="Marchionni L."/>
            <person name="Matsuda H."/>
            <person name="Matsuzawa S."/>
            <person name="Miki H."/>
            <person name="Mignone F."/>
            <person name="Miyake S."/>
            <person name="Morris K."/>
            <person name="Mottagui-Tabar S."/>
            <person name="Mulder N."/>
            <person name="Nakano N."/>
            <person name="Nakauchi H."/>
            <person name="Ng P."/>
            <person name="Nilsson R."/>
            <person name="Nishiguchi S."/>
            <person name="Nishikawa S."/>
            <person name="Nori F."/>
            <person name="Ohara O."/>
            <person name="Okazaki Y."/>
            <person name="Orlando V."/>
            <person name="Pang K.C."/>
            <person name="Pavan W.J."/>
            <person name="Pavesi G."/>
            <person name="Pesole G."/>
            <person name="Petrovsky N."/>
            <person name="Piazza S."/>
            <person name="Reed J."/>
            <person name="Reid J.F."/>
            <person name="Ring B.Z."/>
            <person name="Ringwald M."/>
            <person name="Rost B."/>
            <person name="Ruan Y."/>
            <person name="Salzberg S.L."/>
            <person name="Sandelin A."/>
            <person name="Schneider C."/>
            <person name="Schoenbach C."/>
            <person name="Sekiguchi K."/>
            <person name="Semple C.A."/>
            <person name="Seno S."/>
            <person name="Sessa L."/>
            <person name="Sheng Y."/>
            <person name="Shibata Y."/>
            <person name="Shimada H."/>
            <person name="Shimada K."/>
            <person name="Silva D."/>
            <person name="Sinclair B."/>
            <person name="Sperling S."/>
            <person name="Stupka E."/>
            <person name="Sugiura K."/>
            <person name="Sultana R."/>
            <person name="Takenaka Y."/>
            <person name="Taki K."/>
            <person name="Tammoja K."/>
            <person name="Tan S.L."/>
            <person name="Tang S."/>
            <person name="Taylor M.S."/>
            <person name="Tegner J."/>
            <person name="Teichmann S.A."/>
            <person name="Ueda H.R."/>
            <person name="van Nimwegen E."/>
            <person name="Verardo R."/>
            <person name="Wei C.L."/>
            <person name="Yagi K."/>
            <person name="Yamanishi H."/>
            <person name="Zabarovsky E."/>
            <person name="Zhu S."/>
            <person name="Zimmer A."/>
            <person name="Hide W."/>
            <person name="Bult C."/>
            <person name="Grimmond S.M."/>
            <person name="Teasdale R.D."/>
            <person name="Liu E.T."/>
            <person name="Brusic V."/>
            <person name="Quackenbush J."/>
            <person name="Wahlestedt C."/>
            <person name="Mattick J.S."/>
            <person name="Hume D.A."/>
            <person name="Kai C."/>
            <person name="Sasaki D."/>
            <person name="Tomaru Y."/>
            <person name="Fukuda S."/>
            <person name="Kanamori-Katayama M."/>
            <person name="Suzuki M."/>
            <person name="Aoki J."/>
            <person name="Arakawa T."/>
            <person name="Iida J."/>
            <person name="Imamura K."/>
            <person name="Itoh M."/>
            <person name="Kato T."/>
            <person name="Kawaji H."/>
            <person name="Kawagashira N."/>
            <person name="Kawashima T."/>
            <person name="Kojima M."/>
            <person name="Kondo S."/>
            <person name="Konno H."/>
            <person name="Nakano K."/>
            <person name="Ninomiya N."/>
            <person name="Nishio T."/>
            <person name="Okada M."/>
            <person name="Plessy C."/>
            <person name="Shibata K."/>
            <person name="Shiraki T."/>
            <person name="Suzuki S."/>
            <person name="Tagami M."/>
            <person name="Waki K."/>
            <person name="Watahiki A."/>
            <person name="Okamura-Oho Y."/>
            <person name="Suzuki H."/>
            <person name="Kawai J."/>
            <person name="Hayashizaki Y."/>
        </authorList>
    </citation>
    <scope>NUCLEOTIDE SEQUENCE [LARGE SCALE MRNA]</scope>
    <source>
        <strain>C57BL/6J</strain>
        <strain>DBA/2J</strain>
        <strain>NOD</strain>
        <tissue>Amnion</tissue>
        <tissue>Cerebellum</tissue>
        <tissue>Heart</tissue>
        <tissue>Olfactory bulb</tissue>
        <tissue>Thymus</tissue>
    </source>
</reference>
<reference key="2">
    <citation type="journal article" date="2004" name="Genome Res.">
        <title>The status, quality, and expansion of the NIH full-length cDNA project: the Mammalian Gene Collection (MGC).</title>
        <authorList>
            <consortium name="The MGC Project Team"/>
        </authorList>
    </citation>
    <scope>NUCLEOTIDE SEQUENCE [LARGE SCALE MRNA]</scope>
    <source>
        <strain>FVB/N</strain>
        <tissue>Mammary tumor</tissue>
    </source>
</reference>
<proteinExistence type="evidence at transcript level"/>
<keyword id="KW-0966">Cell projection</keyword>
<keyword id="KW-0963">Cytoplasm</keyword>
<keyword id="KW-0206">Cytoskeleton</keyword>
<keyword id="KW-0539">Nucleus</keyword>
<keyword id="KW-0597">Phosphoprotein</keyword>
<keyword id="KW-1185">Reference proteome</keyword>
<keyword id="KW-0694">RNA-binding</keyword>
<organism>
    <name type="scientific">Mus musculus</name>
    <name type="common">Mouse</name>
    <dbReference type="NCBI Taxonomy" id="10090"/>
    <lineage>
        <taxon>Eukaryota</taxon>
        <taxon>Metazoa</taxon>
        <taxon>Chordata</taxon>
        <taxon>Craniata</taxon>
        <taxon>Vertebrata</taxon>
        <taxon>Euteleostomi</taxon>
        <taxon>Mammalia</taxon>
        <taxon>Eutheria</taxon>
        <taxon>Euarchontoglires</taxon>
        <taxon>Glires</taxon>
        <taxon>Rodentia</taxon>
        <taxon>Myomorpha</taxon>
        <taxon>Muroidea</taxon>
        <taxon>Muridae</taxon>
        <taxon>Murinae</taxon>
        <taxon>Mus</taxon>
        <taxon>Mus</taxon>
    </lineage>
</organism>
<feature type="chain" id="PRO_0000082009" description="Ribosomal RNA-processing protein 7 homolog A">
    <location>
        <begin position="1"/>
        <end position="280"/>
    </location>
</feature>
<feature type="domain" description="RRM" evidence="2">
    <location>
        <begin position="59"/>
        <end position="159"/>
    </location>
</feature>
<feature type="region of interest" description="Disordered" evidence="3">
    <location>
        <begin position="1"/>
        <end position="24"/>
    </location>
</feature>
<feature type="compositionally biased region" description="Basic residues" evidence="3">
    <location>
        <begin position="1"/>
        <end position="10"/>
    </location>
</feature>
<feature type="modified residue" description="Phosphoserine" evidence="1">
    <location>
        <position position="99"/>
    </location>
</feature>
<feature type="sequence conflict" description="In Ref. 1; BAC27942." evidence="4" ref="1">
    <original>P</original>
    <variation>Q</variation>
    <location>
        <position position="103"/>
    </location>
</feature>
<evidence type="ECO:0000250" key="1">
    <source>
        <dbReference type="UniProtKB" id="Q9Y3A4"/>
    </source>
</evidence>
<evidence type="ECO:0000255" key="2"/>
<evidence type="ECO:0000256" key="3">
    <source>
        <dbReference type="SAM" id="MobiDB-lite"/>
    </source>
</evidence>
<evidence type="ECO:0000305" key="4"/>
<name>RRP7A_MOUSE</name>
<gene>
    <name type="primary">Rrp7a</name>
</gene>
<sequence length="280" mass="32399">MVSRRKKRKAGGHEESIPSPPGYSAVPVKFSAKQQAPHYLYMRQHRVRQGTQSTWPPDRTLFILNVPPYCTQESLSRCLSCCGTIKTVELQEKPDLAESPTEPKSQFFHPKPVPGFQVAYVVFQKPSGVSAALNLKGPLLVSTESHLVKSGIHKWISDYEDSVLDPEALRMEVDAFMEAYDKKIAEEEAKAKEEEGVPDEEGWVKVTRRGRRPVLPRTEAASLRVLEKEKRKRARKELLNFYAWQHRETKMEHLAQLRKKFEEDKQRIELMRAQRKFRPY</sequence>
<accession>Q9D1C9</accession>
<accession>Q3TWT8</accession>
<accession>Q8CCK8</accession>